<sequence length="340" mass="38373">MTKPIILTGDRPTGKLHLGHYVGSLKNRVFLQNENKYKMFVFLADQQALTDHAKESELIQESIGNVALDYLSVGLDPKQSTIFIQSQIPELAELSMYYMNLVSLARLERNPTVKTEIAQKGFGESIPSGFLVYPVSQAADITAFKANLVPVGNDQKPMIEQTREIVRSFNHTYHTDCLVEPEGIYPENEKAGRLPGLDGNAKMSKSLGNGIYLSDDADTVRKKVMSMYTDPNHIKIEDPGQIEGNMVFHYLDIFARKEDQADIEAMKEHYQRGGLGDVKTKRYLLDILERELAPIRERRLEYAKDMGEVFRMLQEGSQKARTVAAKTLSEVKSAMGINYF</sequence>
<protein>
    <recommendedName>
        <fullName evidence="1">Tryptophan--tRNA ligase</fullName>
        <ecNumber evidence="1">6.1.1.2</ecNumber>
    </recommendedName>
    <alternativeName>
        <fullName evidence="1">Tryptophanyl-tRNA synthetase</fullName>
        <shortName evidence="1">TrpRS</shortName>
    </alternativeName>
</protein>
<keyword id="KW-0030">Aminoacyl-tRNA synthetase</keyword>
<keyword id="KW-0067">ATP-binding</keyword>
<keyword id="KW-0963">Cytoplasm</keyword>
<keyword id="KW-0436">Ligase</keyword>
<keyword id="KW-0547">Nucleotide-binding</keyword>
<keyword id="KW-0648">Protein biosynthesis</keyword>
<reference key="1">
    <citation type="journal article" date="2004" name="J. Infect. Dis.">
        <title>Progress toward characterization of the group A Streptococcus metagenome: complete genome sequence of a macrolide-resistant serotype M6 strain.</title>
        <authorList>
            <person name="Banks D.J."/>
            <person name="Porcella S.F."/>
            <person name="Barbian K.D."/>
            <person name="Beres S.B."/>
            <person name="Philips L.E."/>
            <person name="Voyich J.M."/>
            <person name="DeLeo F.R."/>
            <person name="Martin J.M."/>
            <person name="Somerville G.A."/>
            <person name="Musser J.M."/>
        </authorList>
    </citation>
    <scope>NUCLEOTIDE SEQUENCE [LARGE SCALE GENOMIC DNA]</scope>
    <source>
        <strain>ATCC BAA-946 / MGAS10394</strain>
    </source>
</reference>
<comment type="function">
    <text evidence="1">Catalyzes the attachment of tryptophan to tRNA(Trp).</text>
</comment>
<comment type="catalytic activity">
    <reaction evidence="1">
        <text>tRNA(Trp) + L-tryptophan + ATP = L-tryptophyl-tRNA(Trp) + AMP + diphosphate + H(+)</text>
        <dbReference type="Rhea" id="RHEA:24080"/>
        <dbReference type="Rhea" id="RHEA-COMP:9671"/>
        <dbReference type="Rhea" id="RHEA-COMP:9705"/>
        <dbReference type="ChEBI" id="CHEBI:15378"/>
        <dbReference type="ChEBI" id="CHEBI:30616"/>
        <dbReference type="ChEBI" id="CHEBI:33019"/>
        <dbReference type="ChEBI" id="CHEBI:57912"/>
        <dbReference type="ChEBI" id="CHEBI:78442"/>
        <dbReference type="ChEBI" id="CHEBI:78535"/>
        <dbReference type="ChEBI" id="CHEBI:456215"/>
        <dbReference type="EC" id="6.1.1.2"/>
    </reaction>
</comment>
<comment type="subunit">
    <text evidence="1">Homodimer.</text>
</comment>
<comment type="subcellular location">
    <subcellularLocation>
        <location evidence="1">Cytoplasm</location>
    </subcellularLocation>
</comment>
<comment type="similarity">
    <text evidence="1">Belongs to the class-I aminoacyl-tRNA synthetase family.</text>
</comment>
<comment type="sequence caution" evidence="2">
    <conflict type="erroneous initiation">
        <sequence resource="EMBL-CDS" id="AAT88011"/>
    </conflict>
</comment>
<name>SYW_STRP6</name>
<proteinExistence type="inferred from homology"/>
<organism>
    <name type="scientific">Streptococcus pyogenes serotype M6 (strain ATCC BAA-946 / MGAS10394)</name>
    <dbReference type="NCBI Taxonomy" id="286636"/>
    <lineage>
        <taxon>Bacteria</taxon>
        <taxon>Bacillati</taxon>
        <taxon>Bacillota</taxon>
        <taxon>Bacilli</taxon>
        <taxon>Lactobacillales</taxon>
        <taxon>Streptococcaceae</taxon>
        <taxon>Streptococcus</taxon>
    </lineage>
</organism>
<evidence type="ECO:0000255" key="1">
    <source>
        <dbReference type="HAMAP-Rule" id="MF_00140"/>
    </source>
</evidence>
<evidence type="ECO:0000305" key="2"/>
<accession>Q5X9A2</accession>
<gene>
    <name evidence="1" type="primary">trpS</name>
    <name type="ordered locus">M6_Spy1876</name>
</gene>
<dbReference type="EC" id="6.1.1.2" evidence="1"/>
<dbReference type="EMBL" id="CP000003">
    <property type="protein sequence ID" value="AAT88011.1"/>
    <property type="status" value="ALT_INIT"/>
    <property type="molecule type" value="Genomic_DNA"/>
</dbReference>
<dbReference type="RefSeq" id="WP_002991455.1">
    <property type="nucleotide sequence ID" value="NC_006086.1"/>
</dbReference>
<dbReference type="SMR" id="Q5X9A2"/>
<dbReference type="GeneID" id="69901625"/>
<dbReference type="KEGG" id="spa:M6_Spy1876"/>
<dbReference type="HOGENOM" id="CLU_029244_0_1_9"/>
<dbReference type="Proteomes" id="UP000001167">
    <property type="component" value="Chromosome"/>
</dbReference>
<dbReference type="GO" id="GO:0005829">
    <property type="term" value="C:cytosol"/>
    <property type="evidence" value="ECO:0007669"/>
    <property type="project" value="TreeGrafter"/>
</dbReference>
<dbReference type="GO" id="GO:0005524">
    <property type="term" value="F:ATP binding"/>
    <property type="evidence" value="ECO:0007669"/>
    <property type="project" value="UniProtKB-UniRule"/>
</dbReference>
<dbReference type="GO" id="GO:0004830">
    <property type="term" value="F:tryptophan-tRNA ligase activity"/>
    <property type="evidence" value="ECO:0007669"/>
    <property type="project" value="UniProtKB-UniRule"/>
</dbReference>
<dbReference type="GO" id="GO:0006436">
    <property type="term" value="P:tryptophanyl-tRNA aminoacylation"/>
    <property type="evidence" value="ECO:0007669"/>
    <property type="project" value="UniProtKB-UniRule"/>
</dbReference>
<dbReference type="CDD" id="cd00806">
    <property type="entry name" value="TrpRS_core"/>
    <property type="match status" value="1"/>
</dbReference>
<dbReference type="FunFam" id="1.10.240.10:FF:000005">
    <property type="entry name" value="Tryptophan--tRNA ligase"/>
    <property type="match status" value="1"/>
</dbReference>
<dbReference type="FunFam" id="3.40.50.620:FF:000094">
    <property type="entry name" value="Tryptophan--tRNA ligase"/>
    <property type="match status" value="1"/>
</dbReference>
<dbReference type="Gene3D" id="3.40.50.620">
    <property type="entry name" value="HUPs"/>
    <property type="match status" value="1"/>
</dbReference>
<dbReference type="Gene3D" id="1.10.240.10">
    <property type="entry name" value="Tyrosyl-Transfer RNA Synthetase"/>
    <property type="match status" value="1"/>
</dbReference>
<dbReference type="HAMAP" id="MF_00140_B">
    <property type="entry name" value="Trp_tRNA_synth_B"/>
    <property type="match status" value="1"/>
</dbReference>
<dbReference type="InterPro" id="IPR001412">
    <property type="entry name" value="aa-tRNA-synth_I_CS"/>
</dbReference>
<dbReference type="InterPro" id="IPR002305">
    <property type="entry name" value="aa-tRNA-synth_Ic"/>
</dbReference>
<dbReference type="InterPro" id="IPR014729">
    <property type="entry name" value="Rossmann-like_a/b/a_fold"/>
</dbReference>
<dbReference type="InterPro" id="IPR002306">
    <property type="entry name" value="Trp-tRNA-ligase"/>
</dbReference>
<dbReference type="InterPro" id="IPR024109">
    <property type="entry name" value="Trp-tRNA-ligase_bac-type"/>
</dbReference>
<dbReference type="InterPro" id="IPR050203">
    <property type="entry name" value="Trp-tRNA_synthetase"/>
</dbReference>
<dbReference type="NCBIfam" id="TIGR00233">
    <property type="entry name" value="trpS"/>
    <property type="match status" value="1"/>
</dbReference>
<dbReference type="PANTHER" id="PTHR43766">
    <property type="entry name" value="TRYPTOPHAN--TRNA LIGASE, MITOCHONDRIAL"/>
    <property type="match status" value="1"/>
</dbReference>
<dbReference type="PANTHER" id="PTHR43766:SF1">
    <property type="entry name" value="TRYPTOPHAN--TRNA LIGASE, MITOCHONDRIAL"/>
    <property type="match status" value="1"/>
</dbReference>
<dbReference type="Pfam" id="PF00579">
    <property type="entry name" value="tRNA-synt_1b"/>
    <property type="match status" value="1"/>
</dbReference>
<dbReference type="PRINTS" id="PR01039">
    <property type="entry name" value="TRNASYNTHTRP"/>
</dbReference>
<dbReference type="SUPFAM" id="SSF52374">
    <property type="entry name" value="Nucleotidylyl transferase"/>
    <property type="match status" value="1"/>
</dbReference>
<dbReference type="PROSITE" id="PS00178">
    <property type="entry name" value="AA_TRNA_LIGASE_I"/>
    <property type="match status" value="1"/>
</dbReference>
<feature type="chain" id="PRO_0000136694" description="Tryptophan--tRNA ligase">
    <location>
        <begin position="1"/>
        <end position="340"/>
    </location>
</feature>
<feature type="short sequence motif" description="'HIGH' region" evidence="1">
    <location>
        <begin position="12"/>
        <end position="20"/>
    </location>
</feature>
<feature type="short sequence motif" description="'KMSKS' region" evidence="1">
    <location>
        <begin position="202"/>
        <end position="206"/>
    </location>
</feature>
<feature type="binding site" evidence="1">
    <location>
        <begin position="11"/>
        <end position="13"/>
    </location>
    <ligand>
        <name>ATP</name>
        <dbReference type="ChEBI" id="CHEBI:30616"/>
    </ligand>
</feature>
<feature type="binding site" evidence="1">
    <location>
        <begin position="19"/>
        <end position="20"/>
    </location>
    <ligand>
        <name>ATP</name>
        <dbReference type="ChEBI" id="CHEBI:30616"/>
    </ligand>
</feature>
<feature type="binding site" evidence="1">
    <location>
        <position position="140"/>
    </location>
    <ligand>
        <name>L-tryptophan</name>
        <dbReference type="ChEBI" id="CHEBI:57912"/>
    </ligand>
</feature>
<feature type="binding site" evidence="1">
    <location>
        <begin position="152"/>
        <end position="154"/>
    </location>
    <ligand>
        <name>ATP</name>
        <dbReference type="ChEBI" id="CHEBI:30616"/>
    </ligand>
</feature>
<feature type="binding site" evidence="1">
    <location>
        <position position="194"/>
    </location>
    <ligand>
        <name>ATP</name>
        <dbReference type="ChEBI" id="CHEBI:30616"/>
    </ligand>
</feature>
<feature type="binding site" evidence="1">
    <location>
        <begin position="202"/>
        <end position="206"/>
    </location>
    <ligand>
        <name>ATP</name>
        <dbReference type="ChEBI" id="CHEBI:30616"/>
    </ligand>
</feature>